<keyword id="KW-0119">Carbohydrate metabolism</keyword>
<keyword id="KW-0963">Cytoplasm</keyword>
<keyword id="KW-0413">Isomerase</keyword>
<keyword id="KW-1185">Reference proteome</keyword>
<keyword id="KW-0684">Rhamnose metabolism</keyword>
<proteinExistence type="inferred from homology"/>
<dbReference type="EC" id="5.1.3.32" evidence="1"/>
<dbReference type="EMBL" id="AE005174">
    <property type="protein sequence ID" value="AAG59095.1"/>
    <property type="molecule type" value="Genomic_DNA"/>
</dbReference>
<dbReference type="EMBL" id="BA000007">
    <property type="protein sequence ID" value="BAB38251.1"/>
    <property type="molecule type" value="Genomic_DNA"/>
</dbReference>
<dbReference type="PIR" id="C86079">
    <property type="entry name" value="C86079"/>
</dbReference>
<dbReference type="PIR" id="D91232">
    <property type="entry name" value="D91232"/>
</dbReference>
<dbReference type="RefSeq" id="NP_312855.1">
    <property type="nucleotide sequence ID" value="NC_002695.1"/>
</dbReference>
<dbReference type="RefSeq" id="WP_000619508.1">
    <property type="nucleotide sequence ID" value="NZ_VOAI01000016.1"/>
</dbReference>
<dbReference type="SMR" id="Q8X8A2"/>
<dbReference type="STRING" id="155864.Z5445"/>
<dbReference type="GeneID" id="915070"/>
<dbReference type="KEGG" id="ece:Z5445"/>
<dbReference type="KEGG" id="ecs:ECs_4828"/>
<dbReference type="PATRIC" id="fig|386585.9.peg.5045"/>
<dbReference type="eggNOG" id="COG3254">
    <property type="taxonomic scope" value="Bacteria"/>
</dbReference>
<dbReference type="HOGENOM" id="CLU_100689_2_0_6"/>
<dbReference type="OMA" id="WAYMADI"/>
<dbReference type="UniPathway" id="UPA00125"/>
<dbReference type="Proteomes" id="UP000000558">
    <property type="component" value="Chromosome"/>
</dbReference>
<dbReference type="Proteomes" id="UP000002519">
    <property type="component" value="Chromosome"/>
</dbReference>
<dbReference type="GO" id="GO:0005737">
    <property type="term" value="C:cytoplasm"/>
    <property type="evidence" value="ECO:0007669"/>
    <property type="project" value="UniProtKB-SubCell"/>
</dbReference>
<dbReference type="GO" id="GO:0062192">
    <property type="term" value="F:L-rhamnose mutarotase activity"/>
    <property type="evidence" value="ECO:0007669"/>
    <property type="project" value="UniProtKB-EC"/>
</dbReference>
<dbReference type="GO" id="GO:0019301">
    <property type="term" value="P:rhamnose catabolic process"/>
    <property type="evidence" value="ECO:0007669"/>
    <property type="project" value="TreeGrafter"/>
</dbReference>
<dbReference type="FunFam" id="3.30.70.100:FF:000013">
    <property type="entry name" value="L-rhamnose mutarotase"/>
    <property type="match status" value="1"/>
</dbReference>
<dbReference type="Gene3D" id="3.30.70.100">
    <property type="match status" value="1"/>
</dbReference>
<dbReference type="HAMAP" id="MF_01663">
    <property type="entry name" value="L_rham_rotase"/>
    <property type="match status" value="1"/>
</dbReference>
<dbReference type="InterPro" id="IPR011008">
    <property type="entry name" value="Dimeric_a/b-barrel"/>
</dbReference>
<dbReference type="InterPro" id="IPR013448">
    <property type="entry name" value="L-rhamnose_mutarotase"/>
</dbReference>
<dbReference type="InterPro" id="IPR008000">
    <property type="entry name" value="Rham/fucose_mutarotase"/>
</dbReference>
<dbReference type="NCBIfam" id="TIGR02625">
    <property type="entry name" value="YiiL_rotase"/>
    <property type="match status" value="1"/>
</dbReference>
<dbReference type="PANTHER" id="PTHR34389">
    <property type="entry name" value="L-RHAMNOSE MUTAROTASE"/>
    <property type="match status" value="1"/>
</dbReference>
<dbReference type="PANTHER" id="PTHR34389:SF2">
    <property type="entry name" value="L-RHAMNOSE MUTAROTASE"/>
    <property type="match status" value="1"/>
</dbReference>
<dbReference type="Pfam" id="PF05336">
    <property type="entry name" value="rhaM"/>
    <property type="match status" value="1"/>
</dbReference>
<dbReference type="SUPFAM" id="SSF54909">
    <property type="entry name" value="Dimeric alpha+beta barrel"/>
    <property type="match status" value="1"/>
</dbReference>
<evidence type="ECO:0000255" key="1">
    <source>
        <dbReference type="HAMAP-Rule" id="MF_01663"/>
    </source>
</evidence>
<sequence length="104" mass="12263">MIRKAFVMQVNPDAHEEYQRRHNPIWPELEAVLKSHGAHNYAIYLDKARNLLFATVEIESEERWNAVASTEICQRWWKYMTDVMPANPDNSPVSSELQEVFYLP</sequence>
<protein>
    <recommendedName>
        <fullName evidence="1">L-rhamnose mutarotase</fullName>
        <ecNumber evidence="1">5.1.3.32</ecNumber>
    </recommendedName>
    <alternativeName>
        <fullName evidence="1">Rhamnose 1-epimerase</fullName>
    </alternativeName>
    <alternativeName>
        <fullName evidence="1">Type-3 mutarotase</fullName>
    </alternativeName>
</protein>
<feature type="chain" id="PRO_0000344574" description="L-rhamnose mutarotase">
    <location>
        <begin position="1"/>
        <end position="104"/>
    </location>
</feature>
<feature type="active site" description="Proton donor" evidence="1">
    <location>
        <position position="22"/>
    </location>
</feature>
<feature type="binding site" evidence="1">
    <location>
        <position position="18"/>
    </location>
    <ligand>
        <name>substrate</name>
    </ligand>
</feature>
<feature type="binding site" evidence="1">
    <location>
        <position position="41"/>
    </location>
    <ligand>
        <name>substrate</name>
    </ligand>
</feature>
<feature type="binding site" evidence="1">
    <location>
        <begin position="76"/>
        <end position="77"/>
    </location>
    <ligand>
        <name>substrate</name>
    </ligand>
</feature>
<reference key="1">
    <citation type="journal article" date="2001" name="Nature">
        <title>Genome sequence of enterohaemorrhagic Escherichia coli O157:H7.</title>
        <authorList>
            <person name="Perna N.T."/>
            <person name="Plunkett G. III"/>
            <person name="Burland V."/>
            <person name="Mau B."/>
            <person name="Glasner J.D."/>
            <person name="Rose D.J."/>
            <person name="Mayhew G.F."/>
            <person name="Evans P.S."/>
            <person name="Gregor J."/>
            <person name="Kirkpatrick H.A."/>
            <person name="Posfai G."/>
            <person name="Hackett J."/>
            <person name="Klink S."/>
            <person name="Boutin A."/>
            <person name="Shao Y."/>
            <person name="Miller L."/>
            <person name="Grotbeck E.J."/>
            <person name="Davis N.W."/>
            <person name="Lim A."/>
            <person name="Dimalanta E.T."/>
            <person name="Potamousis K."/>
            <person name="Apodaca J."/>
            <person name="Anantharaman T.S."/>
            <person name="Lin J."/>
            <person name="Yen G."/>
            <person name="Schwartz D.C."/>
            <person name="Welch R.A."/>
            <person name="Blattner F.R."/>
        </authorList>
    </citation>
    <scope>NUCLEOTIDE SEQUENCE [LARGE SCALE GENOMIC DNA]</scope>
    <source>
        <strain>O157:H7 / EDL933 / ATCC 700927 / EHEC</strain>
    </source>
</reference>
<reference key="2">
    <citation type="journal article" date="2001" name="DNA Res.">
        <title>Complete genome sequence of enterohemorrhagic Escherichia coli O157:H7 and genomic comparison with a laboratory strain K-12.</title>
        <authorList>
            <person name="Hayashi T."/>
            <person name="Makino K."/>
            <person name="Ohnishi M."/>
            <person name="Kurokawa K."/>
            <person name="Ishii K."/>
            <person name="Yokoyama K."/>
            <person name="Han C.-G."/>
            <person name="Ohtsubo E."/>
            <person name="Nakayama K."/>
            <person name="Murata T."/>
            <person name="Tanaka M."/>
            <person name="Tobe T."/>
            <person name="Iida T."/>
            <person name="Takami H."/>
            <person name="Honda T."/>
            <person name="Sasakawa C."/>
            <person name="Ogasawara N."/>
            <person name="Yasunaga T."/>
            <person name="Kuhara S."/>
            <person name="Shiba T."/>
            <person name="Hattori M."/>
            <person name="Shinagawa H."/>
        </authorList>
    </citation>
    <scope>NUCLEOTIDE SEQUENCE [LARGE SCALE GENOMIC DNA]</scope>
    <source>
        <strain>O157:H7 / Sakai / RIMD 0509952 / EHEC</strain>
    </source>
</reference>
<gene>
    <name evidence="1" type="primary">rhaM</name>
    <name type="ordered locus">Z5445</name>
    <name type="ordered locus">ECs4828</name>
</gene>
<name>RHAM_ECO57</name>
<accession>Q8X8A2</accession>
<accession>Q7A999</accession>
<organism>
    <name type="scientific">Escherichia coli O157:H7</name>
    <dbReference type="NCBI Taxonomy" id="83334"/>
    <lineage>
        <taxon>Bacteria</taxon>
        <taxon>Pseudomonadati</taxon>
        <taxon>Pseudomonadota</taxon>
        <taxon>Gammaproteobacteria</taxon>
        <taxon>Enterobacterales</taxon>
        <taxon>Enterobacteriaceae</taxon>
        <taxon>Escherichia</taxon>
    </lineage>
</organism>
<comment type="function">
    <text evidence="1">Involved in the anomeric conversion of L-rhamnose.</text>
</comment>
<comment type="catalytic activity">
    <reaction evidence="1">
        <text>alpha-L-rhamnose = beta-L-rhamnose</text>
        <dbReference type="Rhea" id="RHEA:25584"/>
        <dbReference type="ChEBI" id="CHEBI:27586"/>
        <dbReference type="ChEBI" id="CHEBI:27907"/>
        <dbReference type="EC" id="5.1.3.32"/>
    </reaction>
</comment>
<comment type="pathway">
    <text evidence="1">Carbohydrate metabolism; L-rhamnose metabolism.</text>
</comment>
<comment type="subunit">
    <text evidence="1">Homodimer.</text>
</comment>
<comment type="subcellular location">
    <subcellularLocation>
        <location evidence="1">Cytoplasm</location>
    </subcellularLocation>
</comment>
<comment type="similarity">
    <text evidence="1">Belongs to the rhamnose mutarotase family.</text>
</comment>